<evidence type="ECO:0000250" key="1"/>
<evidence type="ECO:0000255" key="2">
    <source>
        <dbReference type="HAMAP-Rule" id="MF_00047"/>
    </source>
</evidence>
<proteinExistence type="inferred from homology"/>
<protein>
    <recommendedName>
        <fullName evidence="2">D-alanine--D-alanine ligase</fullName>
        <ecNumber evidence="2">6.3.2.4</ecNumber>
    </recommendedName>
    <alternativeName>
        <fullName evidence="2">D-Ala-D-Ala ligase</fullName>
    </alternativeName>
    <alternativeName>
        <fullName evidence="2">D-alanylalanine synthetase</fullName>
    </alternativeName>
</protein>
<gene>
    <name evidence="2" type="primary">ddl</name>
    <name type="ordered locus">Reut_A2977</name>
</gene>
<reference key="1">
    <citation type="journal article" date="2010" name="PLoS ONE">
        <title>The complete multipartite genome sequence of Cupriavidus necator JMP134, a versatile pollutant degrader.</title>
        <authorList>
            <person name="Lykidis A."/>
            <person name="Perez-Pantoja D."/>
            <person name="Ledger T."/>
            <person name="Mavromatis K."/>
            <person name="Anderson I.J."/>
            <person name="Ivanova N.N."/>
            <person name="Hooper S.D."/>
            <person name="Lapidus A."/>
            <person name="Lucas S."/>
            <person name="Gonzalez B."/>
            <person name="Kyrpides N.C."/>
        </authorList>
    </citation>
    <scope>NUCLEOTIDE SEQUENCE [LARGE SCALE GENOMIC DNA]</scope>
    <source>
        <strain>JMP134 / LMG 1197</strain>
    </source>
</reference>
<accession>Q46WZ6</accession>
<feature type="chain" id="PRO_0000341159" description="D-alanine--D-alanine ligase">
    <location>
        <begin position="1"/>
        <end position="327"/>
    </location>
</feature>
<feature type="domain" description="ATP-grasp" evidence="2">
    <location>
        <begin position="113"/>
        <end position="312"/>
    </location>
</feature>
<feature type="binding site" evidence="2">
    <location>
        <begin position="139"/>
        <end position="194"/>
    </location>
    <ligand>
        <name>ATP</name>
        <dbReference type="ChEBI" id="CHEBI:30616"/>
    </ligand>
</feature>
<feature type="binding site" evidence="2">
    <location>
        <position position="266"/>
    </location>
    <ligand>
        <name>Mg(2+)</name>
        <dbReference type="ChEBI" id="CHEBI:18420"/>
        <label>1</label>
    </ligand>
</feature>
<feature type="binding site" evidence="2">
    <location>
        <position position="279"/>
    </location>
    <ligand>
        <name>Mg(2+)</name>
        <dbReference type="ChEBI" id="CHEBI:18420"/>
        <label>1</label>
    </ligand>
</feature>
<feature type="binding site" evidence="2">
    <location>
        <position position="279"/>
    </location>
    <ligand>
        <name>Mg(2+)</name>
        <dbReference type="ChEBI" id="CHEBI:18420"/>
        <label>2</label>
    </ligand>
</feature>
<feature type="binding site" evidence="2">
    <location>
        <position position="281"/>
    </location>
    <ligand>
        <name>Mg(2+)</name>
        <dbReference type="ChEBI" id="CHEBI:18420"/>
        <label>2</label>
    </ligand>
</feature>
<keyword id="KW-0067">ATP-binding</keyword>
<keyword id="KW-0133">Cell shape</keyword>
<keyword id="KW-0961">Cell wall biogenesis/degradation</keyword>
<keyword id="KW-0963">Cytoplasm</keyword>
<keyword id="KW-0436">Ligase</keyword>
<keyword id="KW-0460">Magnesium</keyword>
<keyword id="KW-0464">Manganese</keyword>
<keyword id="KW-0479">Metal-binding</keyword>
<keyword id="KW-0547">Nucleotide-binding</keyword>
<keyword id="KW-0573">Peptidoglycan synthesis</keyword>
<sequence>MSFVANPKIDPKSLGKVGVLYGGRSAEREISLMSGSGVLAALQSRGVDAHGFDPATQSVAELAAAGFDRVFIALHGRYGEDGTMQGLLEQLGVPYTGSGVLASALAMDKQATKRLWMTHDLSTPRFAMLYADTDFDAVVADLGLPLIVKPAREGSSIGLSKVTDASQMREAFEKAAALDNDVIAETFIDGAELTCPLVGEGATAEALPVIRIVAPDSNYDYQNKYFTDDTQYLCPSGLSAEVEREVQQLAVQAYRVLGCRGWARADVMLRADGKPFLLEMNTSPGMTGHSLVPMAARAAGISYEDFVMQVVAAATLDLHPNEHWKPE</sequence>
<organism>
    <name type="scientific">Cupriavidus pinatubonensis (strain JMP 134 / LMG 1197)</name>
    <name type="common">Cupriavidus necator (strain JMP 134)</name>
    <dbReference type="NCBI Taxonomy" id="264198"/>
    <lineage>
        <taxon>Bacteria</taxon>
        <taxon>Pseudomonadati</taxon>
        <taxon>Pseudomonadota</taxon>
        <taxon>Betaproteobacteria</taxon>
        <taxon>Burkholderiales</taxon>
        <taxon>Burkholderiaceae</taxon>
        <taxon>Cupriavidus</taxon>
    </lineage>
</organism>
<dbReference type="EC" id="6.3.2.4" evidence="2"/>
<dbReference type="EMBL" id="CP000090">
    <property type="protein sequence ID" value="AAZ62337.1"/>
    <property type="molecule type" value="Genomic_DNA"/>
</dbReference>
<dbReference type="SMR" id="Q46WZ6"/>
<dbReference type="STRING" id="264198.Reut_A2977"/>
<dbReference type="KEGG" id="reu:Reut_A2977"/>
<dbReference type="eggNOG" id="COG1181">
    <property type="taxonomic scope" value="Bacteria"/>
</dbReference>
<dbReference type="HOGENOM" id="CLU_039268_1_2_4"/>
<dbReference type="OrthoDB" id="9813261at2"/>
<dbReference type="UniPathway" id="UPA00219"/>
<dbReference type="GO" id="GO:0005829">
    <property type="term" value="C:cytosol"/>
    <property type="evidence" value="ECO:0007669"/>
    <property type="project" value="TreeGrafter"/>
</dbReference>
<dbReference type="GO" id="GO:0005524">
    <property type="term" value="F:ATP binding"/>
    <property type="evidence" value="ECO:0007669"/>
    <property type="project" value="UniProtKB-KW"/>
</dbReference>
<dbReference type="GO" id="GO:0008716">
    <property type="term" value="F:D-alanine-D-alanine ligase activity"/>
    <property type="evidence" value="ECO:0007669"/>
    <property type="project" value="UniProtKB-UniRule"/>
</dbReference>
<dbReference type="GO" id="GO:0046872">
    <property type="term" value="F:metal ion binding"/>
    <property type="evidence" value="ECO:0007669"/>
    <property type="project" value="UniProtKB-KW"/>
</dbReference>
<dbReference type="GO" id="GO:0071555">
    <property type="term" value="P:cell wall organization"/>
    <property type="evidence" value="ECO:0007669"/>
    <property type="project" value="UniProtKB-KW"/>
</dbReference>
<dbReference type="GO" id="GO:0009252">
    <property type="term" value="P:peptidoglycan biosynthetic process"/>
    <property type="evidence" value="ECO:0007669"/>
    <property type="project" value="UniProtKB-UniRule"/>
</dbReference>
<dbReference type="GO" id="GO:0008360">
    <property type="term" value="P:regulation of cell shape"/>
    <property type="evidence" value="ECO:0007669"/>
    <property type="project" value="UniProtKB-KW"/>
</dbReference>
<dbReference type="FunFam" id="3.30.470.20:FF:000008">
    <property type="entry name" value="D-alanine--D-alanine ligase"/>
    <property type="match status" value="1"/>
</dbReference>
<dbReference type="FunFam" id="3.40.50.20:FF:000013">
    <property type="entry name" value="D-alanine--D-alanine ligase"/>
    <property type="match status" value="1"/>
</dbReference>
<dbReference type="Gene3D" id="3.40.50.20">
    <property type="match status" value="1"/>
</dbReference>
<dbReference type="Gene3D" id="3.30.1490.20">
    <property type="entry name" value="ATP-grasp fold, A domain"/>
    <property type="match status" value="1"/>
</dbReference>
<dbReference type="Gene3D" id="3.30.470.20">
    <property type="entry name" value="ATP-grasp fold, B domain"/>
    <property type="match status" value="1"/>
</dbReference>
<dbReference type="HAMAP" id="MF_00047">
    <property type="entry name" value="Dala_Dala_lig"/>
    <property type="match status" value="1"/>
</dbReference>
<dbReference type="InterPro" id="IPR011761">
    <property type="entry name" value="ATP-grasp"/>
</dbReference>
<dbReference type="InterPro" id="IPR013815">
    <property type="entry name" value="ATP_grasp_subdomain_1"/>
</dbReference>
<dbReference type="InterPro" id="IPR000291">
    <property type="entry name" value="D-Ala_lig_Van_CS"/>
</dbReference>
<dbReference type="InterPro" id="IPR005905">
    <property type="entry name" value="D_ala_D_ala"/>
</dbReference>
<dbReference type="InterPro" id="IPR011095">
    <property type="entry name" value="Dala_Dala_lig_C"/>
</dbReference>
<dbReference type="InterPro" id="IPR011127">
    <property type="entry name" value="Dala_Dala_lig_N"/>
</dbReference>
<dbReference type="InterPro" id="IPR016185">
    <property type="entry name" value="PreATP-grasp_dom_sf"/>
</dbReference>
<dbReference type="NCBIfam" id="TIGR01205">
    <property type="entry name" value="D_ala_D_alaTIGR"/>
    <property type="match status" value="1"/>
</dbReference>
<dbReference type="NCBIfam" id="NF002378">
    <property type="entry name" value="PRK01372.1"/>
    <property type="match status" value="1"/>
</dbReference>
<dbReference type="PANTHER" id="PTHR23132">
    <property type="entry name" value="D-ALANINE--D-ALANINE LIGASE"/>
    <property type="match status" value="1"/>
</dbReference>
<dbReference type="PANTHER" id="PTHR23132:SF23">
    <property type="entry name" value="D-ALANINE--D-ALANINE LIGASE B"/>
    <property type="match status" value="1"/>
</dbReference>
<dbReference type="Pfam" id="PF07478">
    <property type="entry name" value="Dala_Dala_lig_C"/>
    <property type="match status" value="1"/>
</dbReference>
<dbReference type="Pfam" id="PF01820">
    <property type="entry name" value="Dala_Dala_lig_N"/>
    <property type="match status" value="1"/>
</dbReference>
<dbReference type="PIRSF" id="PIRSF039102">
    <property type="entry name" value="Ddl/VanB"/>
    <property type="match status" value="1"/>
</dbReference>
<dbReference type="SUPFAM" id="SSF56059">
    <property type="entry name" value="Glutathione synthetase ATP-binding domain-like"/>
    <property type="match status" value="1"/>
</dbReference>
<dbReference type="SUPFAM" id="SSF52440">
    <property type="entry name" value="PreATP-grasp domain"/>
    <property type="match status" value="1"/>
</dbReference>
<dbReference type="PROSITE" id="PS50975">
    <property type="entry name" value="ATP_GRASP"/>
    <property type="match status" value="1"/>
</dbReference>
<dbReference type="PROSITE" id="PS00843">
    <property type="entry name" value="DALA_DALA_LIGASE_1"/>
    <property type="match status" value="1"/>
</dbReference>
<dbReference type="PROSITE" id="PS00844">
    <property type="entry name" value="DALA_DALA_LIGASE_2"/>
    <property type="match status" value="1"/>
</dbReference>
<name>DDL_CUPPJ</name>
<comment type="function">
    <text evidence="2">Cell wall formation.</text>
</comment>
<comment type="catalytic activity">
    <reaction evidence="2">
        <text>2 D-alanine + ATP = D-alanyl-D-alanine + ADP + phosphate + H(+)</text>
        <dbReference type="Rhea" id="RHEA:11224"/>
        <dbReference type="ChEBI" id="CHEBI:15378"/>
        <dbReference type="ChEBI" id="CHEBI:30616"/>
        <dbReference type="ChEBI" id="CHEBI:43474"/>
        <dbReference type="ChEBI" id="CHEBI:57416"/>
        <dbReference type="ChEBI" id="CHEBI:57822"/>
        <dbReference type="ChEBI" id="CHEBI:456216"/>
        <dbReference type="EC" id="6.3.2.4"/>
    </reaction>
</comment>
<comment type="cofactor">
    <cofactor evidence="1">
        <name>Mg(2+)</name>
        <dbReference type="ChEBI" id="CHEBI:18420"/>
    </cofactor>
    <cofactor evidence="1">
        <name>Mn(2+)</name>
        <dbReference type="ChEBI" id="CHEBI:29035"/>
    </cofactor>
    <text evidence="1">Binds 2 magnesium or manganese ions per subunit.</text>
</comment>
<comment type="pathway">
    <text evidence="2">Cell wall biogenesis; peptidoglycan biosynthesis.</text>
</comment>
<comment type="subcellular location">
    <subcellularLocation>
        <location evidence="2">Cytoplasm</location>
    </subcellularLocation>
</comment>
<comment type="similarity">
    <text evidence="2">Belongs to the D-alanine--D-alanine ligase family.</text>
</comment>